<dbReference type="EC" id="1.17.99.9" evidence="1"/>
<dbReference type="EMBL" id="CP000390">
    <property type="protein sequence ID" value="ABG62556.1"/>
    <property type="molecule type" value="Genomic_DNA"/>
</dbReference>
<dbReference type="SMR" id="Q11J69"/>
<dbReference type="STRING" id="266779.Meso_1160"/>
<dbReference type="KEGG" id="mes:Meso_1160"/>
<dbReference type="eggNOG" id="COG1612">
    <property type="taxonomic scope" value="Bacteria"/>
</dbReference>
<dbReference type="HOGENOM" id="CLU_017627_0_0_5"/>
<dbReference type="OrthoDB" id="9793156at2"/>
<dbReference type="UniPathway" id="UPA00269">
    <property type="reaction ID" value="UER00713"/>
</dbReference>
<dbReference type="GO" id="GO:0005886">
    <property type="term" value="C:plasma membrane"/>
    <property type="evidence" value="ECO:0007669"/>
    <property type="project" value="UniProtKB-SubCell"/>
</dbReference>
<dbReference type="GO" id="GO:0046872">
    <property type="term" value="F:metal ion binding"/>
    <property type="evidence" value="ECO:0007669"/>
    <property type="project" value="UniProtKB-KW"/>
</dbReference>
<dbReference type="GO" id="GO:0016653">
    <property type="term" value="F:oxidoreductase activity, acting on NAD(P)H, heme protein as acceptor"/>
    <property type="evidence" value="ECO:0007669"/>
    <property type="project" value="InterPro"/>
</dbReference>
<dbReference type="GO" id="GO:0006784">
    <property type="term" value="P:heme A biosynthetic process"/>
    <property type="evidence" value="ECO:0007669"/>
    <property type="project" value="UniProtKB-UniRule"/>
</dbReference>
<dbReference type="HAMAP" id="MF_01665">
    <property type="entry name" value="HemeA_synth_type2"/>
    <property type="match status" value="1"/>
</dbReference>
<dbReference type="InterPro" id="IPR003780">
    <property type="entry name" value="COX15/CtaA_fam"/>
</dbReference>
<dbReference type="InterPro" id="IPR023754">
    <property type="entry name" value="HemeA_Synthase_type2"/>
</dbReference>
<dbReference type="PANTHER" id="PTHR23289">
    <property type="entry name" value="CYTOCHROME C OXIDASE ASSEMBLY PROTEIN COX15"/>
    <property type="match status" value="1"/>
</dbReference>
<dbReference type="PANTHER" id="PTHR23289:SF2">
    <property type="entry name" value="CYTOCHROME C OXIDASE ASSEMBLY PROTEIN COX15 HOMOLOG"/>
    <property type="match status" value="1"/>
</dbReference>
<dbReference type="Pfam" id="PF02628">
    <property type="entry name" value="COX15-CtaA"/>
    <property type="match status" value="1"/>
</dbReference>
<keyword id="KW-1003">Cell membrane</keyword>
<keyword id="KW-0350">Heme biosynthesis</keyword>
<keyword id="KW-0408">Iron</keyword>
<keyword id="KW-0472">Membrane</keyword>
<keyword id="KW-0479">Metal-binding</keyword>
<keyword id="KW-0560">Oxidoreductase</keyword>
<keyword id="KW-0812">Transmembrane</keyword>
<keyword id="KW-1133">Transmembrane helix</keyword>
<sequence>MVAATEFPVSPMLTDAARRNRLWVRIWLYCVIVTLFAIVLVGGATRLTDSGLSITEWKPIHGVIPPLGEAEWAEEFARYQQIPEYEQINKGMSLEEFKGIFWWEWAHRLLARGVGFVFALPLLFFWVTGRLERHLKPKLLGILALGGLQGAVGWWMVASGLSERVDVSQYRLATHLTIACLIFNATMAVARGLAPHSGKPALDSTRRFAFWLVVAVLVQIYLGGLVAGLDAGMAYNTWPLMDGALVPQGLFEHRPAWVNLFENPKTVQFVHRLGAYVVLLLALWHAIATLRAEPDSTHARRAVLLFLLVCVQAAIGIATLLMVVPMDVALAHQAMALIVLGFATAHWRATRGAYPFMQAAA</sequence>
<gene>
    <name evidence="1" type="primary">ctaA</name>
    <name type="ordered locus">Meso_1160</name>
</gene>
<evidence type="ECO:0000255" key="1">
    <source>
        <dbReference type="HAMAP-Rule" id="MF_01665"/>
    </source>
</evidence>
<comment type="function">
    <text evidence="1">Catalyzes the conversion of heme O to heme A by two successive hydroxylations of the methyl group at C8. The first hydroxylation forms heme I, the second hydroxylation results in an unstable dihydroxymethyl group, which spontaneously dehydrates, resulting in the formyl group of heme A.</text>
</comment>
<comment type="catalytic activity">
    <reaction evidence="1">
        <text>Fe(II)-heme o + 2 A + H2O = Fe(II)-heme a + 2 AH2</text>
        <dbReference type="Rhea" id="RHEA:63388"/>
        <dbReference type="ChEBI" id="CHEBI:13193"/>
        <dbReference type="ChEBI" id="CHEBI:15377"/>
        <dbReference type="ChEBI" id="CHEBI:17499"/>
        <dbReference type="ChEBI" id="CHEBI:60530"/>
        <dbReference type="ChEBI" id="CHEBI:61715"/>
        <dbReference type="EC" id="1.17.99.9"/>
    </reaction>
    <physiologicalReaction direction="left-to-right" evidence="1">
        <dbReference type="Rhea" id="RHEA:63389"/>
    </physiologicalReaction>
</comment>
<comment type="cofactor">
    <cofactor evidence="1">
        <name>heme b</name>
        <dbReference type="ChEBI" id="CHEBI:60344"/>
    </cofactor>
</comment>
<comment type="pathway">
    <text evidence="1">Porphyrin-containing compound metabolism; heme A biosynthesis; heme A from heme O: step 1/1.</text>
</comment>
<comment type="subunit">
    <text evidence="1">Interacts with CtaB.</text>
</comment>
<comment type="subcellular location">
    <subcellularLocation>
        <location evidence="1">Cell membrane</location>
        <topology evidence="1">Multi-pass membrane protein</topology>
    </subcellularLocation>
</comment>
<comment type="similarity">
    <text evidence="1">Belongs to the COX15/CtaA family. Type 2 subfamily.</text>
</comment>
<accession>Q11J69</accession>
<proteinExistence type="inferred from homology"/>
<protein>
    <recommendedName>
        <fullName evidence="1">Heme A synthase</fullName>
        <shortName evidence="1">HAS</shortName>
        <ecNumber evidence="1">1.17.99.9</ecNumber>
    </recommendedName>
    <alternativeName>
        <fullName evidence="1">Cytochrome aa3-controlling protein</fullName>
    </alternativeName>
</protein>
<name>CTAA_CHESB</name>
<organism>
    <name type="scientific">Chelativorans sp. (strain BNC1)</name>
    <dbReference type="NCBI Taxonomy" id="266779"/>
    <lineage>
        <taxon>Bacteria</taxon>
        <taxon>Pseudomonadati</taxon>
        <taxon>Pseudomonadota</taxon>
        <taxon>Alphaproteobacteria</taxon>
        <taxon>Hyphomicrobiales</taxon>
        <taxon>Phyllobacteriaceae</taxon>
        <taxon>Chelativorans</taxon>
    </lineage>
</organism>
<reference key="1">
    <citation type="submission" date="2006-06" db="EMBL/GenBank/DDBJ databases">
        <title>Complete sequence of chromosome of Mesorhizobium sp. BNC1.</title>
        <authorList>
            <consortium name="US DOE Joint Genome Institute"/>
            <person name="Copeland A."/>
            <person name="Lucas S."/>
            <person name="Lapidus A."/>
            <person name="Barry K."/>
            <person name="Detter J.C."/>
            <person name="Glavina del Rio T."/>
            <person name="Hammon N."/>
            <person name="Israni S."/>
            <person name="Dalin E."/>
            <person name="Tice H."/>
            <person name="Pitluck S."/>
            <person name="Chertkov O."/>
            <person name="Brettin T."/>
            <person name="Bruce D."/>
            <person name="Han C."/>
            <person name="Tapia R."/>
            <person name="Gilna P."/>
            <person name="Schmutz J."/>
            <person name="Larimer F."/>
            <person name="Land M."/>
            <person name="Hauser L."/>
            <person name="Kyrpides N."/>
            <person name="Mikhailova N."/>
            <person name="Richardson P."/>
        </authorList>
    </citation>
    <scope>NUCLEOTIDE SEQUENCE [LARGE SCALE GENOMIC DNA]</scope>
    <source>
        <strain>BNC1</strain>
    </source>
</reference>
<feature type="chain" id="PRO_0000349043" description="Heme A synthase">
    <location>
        <begin position="1"/>
        <end position="361"/>
    </location>
</feature>
<feature type="transmembrane region" description="Helical" evidence="1">
    <location>
        <begin position="22"/>
        <end position="42"/>
    </location>
</feature>
<feature type="transmembrane region" description="Helical" evidence="1">
    <location>
        <begin position="109"/>
        <end position="129"/>
    </location>
</feature>
<feature type="transmembrane region" description="Helical" evidence="1">
    <location>
        <begin position="139"/>
        <end position="159"/>
    </location>
</feature>
<feature type="transmembrane region" description="Helical" evidence="1">
    <location>
        <begin position="175"/>
        <end position="195"/>
    </location>
</feature>
<feature type="transmembrane region" description="Helical" evidence="1">
    <location>
        <begin position="208"/>
        <end position="228"/>
    </location>
</feature>
<feature type="transmembrane region" description="Helical" evidence="1">
    <location>
        <begin position="269"/>
        <end position="289"/>
    </location>
</feature>
<feature type="transmembrane region" description="Helical" evidence="1">
    <location>
        <begin position="303"/>
        <end position="323"/>
    </location>
</feature>
<feature type="transmembrane region" description="Helical" evidence="1">
    <location>
        <begin position="324"/>
        <end position="344"/>
    </location>
</feature>
<feature type="binding site" description="axial binding residue" evidence="1">
    <location>
        <position position="271"/>
    </location>
    <ligand>
        <name>heme</name>
        <dbReference type="ChEBI" id="CHEBI:30413"/>
    </ligand>
    <ligandPart>
        <name>Fe</name>
        <dbReference type="ChEBI" id="CHEBI:18248"/>
    </ligandPart>
</feature>
<feature type="binding site" description="axial binding residue" evidence="1">
    <location>
        <position position="332"/>
    </location>
    <ligand>
        <name>heme</name>
        <dbReference type="ChEBI" id="CHEBI:30413"/>
    </ligand>
    <ligandPart>
        <name>Fe</name>
        <dbReference type="ChEBI" id="CHEBI:18248"/>
    </ligandPart>
</feature>